<evidence type="ECO:0000255" key="1">
    <source>
        <dbReference type="HAMAP-Rule" id="MF_01850"/>
    </source>
</evidence>
<dbReference type="EC" id="2.8.1.-" evidence="1"/>
<dbReference type="EMBL" id="CP000489">
    <property type="protein sequence ID" value="ABL68986.1"/>
    <property type="molecule type" value="Genomic_DNA"/>
</dbReference>
<dbReference type="RefSeq" id="WP_011747214.1">
    <property type="nucleotide sequence ID" value="NC_008686.1"/>
</dbReference>
<dbReference type="SMR" id="A1B0E2"/>
<dbReference type="STRING" id="318586.Pden_0875"/>
<dbReference type="EnsemblBacteria" id="ABL68986">
    <property type="protein sequence ID" value="ABL68986"/>
    <property type="gene ID" value="Pden_0875"/>
</dbReference>
<dbReference type="GeneID" id="93452099"/>
<dbReference type="KEGG" id="pde:Pden_0875"/>
<dbReference type="eggNOG" id="COG0037">
    <property type="taxonomic scope" value="Bacteria"/>
</dbReference>
<dbReference type="HOGENOM" id="CLU_026481_0_0_5"/>
<dbReference type="OrthoDB" id="9801054at2"/>
<dbReference type="Proteomes" id="UP000000361">
    <property type="component" value="Chromosome 1"/>
</dbReference>
<dbReference type="GO" id="GO:0005737">
    <property type="term" value="C:cytoplasm"/>
    <property type="evidence" value="ECO:0007669"/>
    <property type="project" value="UniProtKB-SubCell"/>
</dbReference>
<dbReference type="GO" id="GO:0051539">
    <property type="term" value="F:4 iron, 4 sulfur cluster binding"/>
    <property type="evidence" value="ECO:0007669"/>
    <property type="project" value="UniProtKB-UniRule"/>
</dbReference>
<dbReference type="GO" id="GO:0005524">
    <property type="term" value="F:ATP binding"/>
    <property type="evidence" value="ECO:0007669"/>
    <property type="project" value="UniProtKB-UniRule"/>
</dbReference>
<dbReference type="GO" id="GO:0000287">
    <property type="term" value="F:magnesium ion binding"/>
    <property type="evidence" value="ECO:0007669"/>
    <property type="project" value="UniProtKB-UniRule"/>
</dbReference>
<dbReference type="GO" id="GO:0016783">
    <property type="term" value="F:sulfurtransferase activity"/>
    <property type="evidence" value="ECO:0007669"/>
    <property type="project" value="UniProtKB-UniRule"/>
</dbReference>
<dbReference type="GO" id="GO:0000049">
    <property type="term" value="F:tRNA binding"/>
    <property type="evidence" value="ECO:0007669"/>
    <property type="project" value="UniProtKB-KW"/>
</dbReference>
<dbReference type="GO" id="GO:0034227">
    <property type="term" value="P:tRNA thio-modification"/>
    <property type="evidence" value="ECO:0007669"/>
    <property type="project" value="UniProtKB-UniRule"/>
</dbReference>
<dbReference type="CDD" id="cd24138">
    <property type="entry name" value="TtcA-like"/>
    <property type="match status" value="1"/>
</dbReference>
<dbReference type="Gene3D" id="3.40.50.620">
    <property type="entry name" value="HUPs"/>
    <property type="match status" value="1"/>
</dbReference>
<dbReference type="HAMAP" id="MF_01850">
    <property type="entry name" value="TtcA"/>
    <property type="match status" value="1"/>
</dbReference>
<dbReference type="InterPro" id="IPR014729">
    <property type="entry name" value="Rossmann-like_a/b/a_fold"/>
</dbReference>
<dbReference type="InterPro" id="IPR011063">
    <property type="entry name" value="TilS/TtcA_N"/>
</dbReference>
<dbReference type="InterPro" id="IPR012089">
    <property type="entry name" value="tRNA_Cyd_32_2_STrfase"/>
</dbReference>
<dbReference type="InterPro" id="IPR035107">
    <property type="entry name" value="tRNA_thiolation_TtcA_Ctu1"/>
</dbReference>
<dbReference type="NCBIfam" id="NF007972">
    <property type="entry name" value="PRK10696.1"/>
    <property type="match status" value="1"/>
</dbReference>
<dbReference type="PANTHER" id="PTHR43686:SF1">
    <property type="entry name" value="AMINOTRAN_5 DOMAIN-CONTAINING PROTEIN"/>
    <property type="match status" value="1"/>
</dbReference>
<dbReference type="PANTHER" id="PTHR43686">
    <property type="entry name" value="SULFURTRANSFERASE-RELATED"/>
    <property type="match status" value="1"/>
</dbReference>
<dbReference type="Pfam" id="PF01171">
    <property type="entry name" value="ATP_bind_3"/>
    <property type="match status" value="1"/>
</dbReference>
<dbReference type="PIRSF" id="PIRSF004976">
    <property type="entry name" value="ATPase_YdaO"/>
    <property type="match status" value="1"/>
</dbReference>
<dbReference type="SUPFAM" id="SSF52402">
    <property type="entry name" value="Adenine nucleotide alpha hydrolases-like"/>
    <property type="match status" value="1"/>
</dbReference>
<sequence length="297" mass="34274">MRDETGETQDLEAEEIHPLFHGAPGSTEFRKLRKRLVRETRAAIETYDMIRPGDRWLVCLSGGKDSYTLLAVLHELKWRGLLPVELLACNLDQGQPGFPATVLPEFLTQRQVPHRIEYQDTYSIVKEKVPEGRTYCSLCSRLRRGNLYRIAREEGCQAVVLGHHRDDILETFFMNLFHGGRLASMPPKLLNEEGDLNVLRPLAFVAEADCDRFARAMNYPVIPCDLCGSQEGLQRMQVKRLLDEWESRSPGRRRVMFRALMNVRPSHLPDPKLFDFTALMPDMSDFREKDVPILREH</sequence>
<reference key="1">
    <citation type="submission" date="2006-12" db="EMBL/GenBank/DDBJ databases">
        <title>Complete sequence of chromosome 1 of Paracoccus denitrificans PD1222.</title>
        <authorList>
            <person name="Copeland A."/>
            <person name="Lucas S."/>
            <person name="Lapidus A."/>
            <person name="Barry K."/>
            <person name="Detter J.C."/>
            <person name="Glavina del Rio T."/>
            <person name="Hammon N."/>
            <person name="Israni S."/>
            <person name="Dalin E."/>
            <person name="Tice H."/>
            <person name="Pitluck S."/>
            <person name="Munk A.C."/>
            <person name="Brettin T."/>
            <person name="Bruce D."/>
            <person name="Han C."/>
            <person name="Tapia R."/>
            <person name="Gilna P."/>
            <person name="Schmutz J."/>
            <person name="Larimer F."/>
            <person name="Land M."/>
            <person name="Hauser L."/>
            <person name="Kyrpides N."/>
            <person name="Lykidis A."/>
            <person name="Spiro S."/>
            <person name="Richardson D.J."/>
            <person name="Moir J.W.B."/>
            <person name="Ferguson S.J."/>
            <person name="van Spanning R.J.M."/>
            <person name="Richardson P."/>
        </authorList>
    </citation>
    <scope>NUCLEOTIDE SEQUENCE [LARGE SCALE GENOMIC DNA]</scope>
    <source>
        <strain>Pd 1222</strain>
    </source>
</reference>
<gene>
    <name evidence="1" type="primary">ttcA</name>
    <name type="ordered locus">Pden_0875</name>
</gene>
<proteinExistence type="inferred from homology"/>
<protein>
    <recommendedName>
        <fullName evidence="1">tRNA-cytidine(32) 2-sulfurtransferase</fullName>
        <ecNumber evidence="1">2.8.1.-</ecNumber>
    </recommendedName>
    <alternativeName>
        <fullName evidence="1">Two-thiocytidine biosynthesis protein A</fullName>
    </alternativeName>
    <alternativeName>
        <fullName evidence="1">tRNA 2-thiocytidine biosynthesis protein TtcA</fullName>
    </alternativeName>
</protein>
<name>TTCA_PARDP</name>
<comment type="function">
    <text evidence="1">Catalyzes the ATP-dependent 2-thiolation of cytidine in position 32 of tRNA, to form 2-thiocytidine (s(2)C32). The sulfur atoms are provided by the cysteine/cysteine desulfurase (IscS) system.</text>
</comment>
<comment type="catalytic activity">
    <reaction evidence="1">
        <text>cytidine(32) in tRNA + S-sulfanyl-L-cysteinyl-[cysteine desulfurase] + AH2 + ATP = 2-thiocytidine(32) in tRNA + L-cysteinyl-[cysteine desulfurase] + A + AMP + diphosphate + H(+)</text>
        <dbReference type="Rhea" id="RHEA:57048"/>
        <dbReference type="Rhea" id="RHEA-COMP:10288"/>
        <dbReference type="Rhea" id="RHEA-COMP:12157"/>
        <dbReference type="Rhea" id="RHEA-COMP:12158"/>
        <dbReference type="Rhea" id="RHEA-COMP:14821"/>
        <dbReference type="ChEBI" id="CHEBI:13193"/>
        <dbReference type="ChEBI" id="CHEBI:15378"/>
        <dbReference type="ChEBI" id="CHEBI:17499"/>
        <dbReference type="ChEBI" id="CHEBI:29950"/>
        <dbReference type="ChEBI" id="CHEBI:30616"/>
        <dbReference type="ChEBI" id="CHEBI:33019"/>
        <dbReference type="ChEBI" id="CHEBI:61963"/>
        <dbReference type="ChEBI" id="CHEBI:82748"/>
        <dbReference type="ChEBI" id="CHEBI:141453"/>
        <dbReference type="ChEBI" id="CHEBI:456215"/>
    </reaction>
    <physiologicalReaction direction="left-to-right" evidence="1">
        <dbReference type="Rhea" id="RHEA:57049"/>
    </physiologicalReaction>
</comment>
<comment type="cofactor">
    <cofactor evidence="1">
        <name>Mg(2+)</name>
        <dbReference type="ChEBI" id="CHEBI:18420"/>
    </cofactor>
</comment>
<comment type="cofactor">
    <cofactor evidence="1">
        <name>[4Fe-4S] cluster</name>
        <dbReference type="ChEBI" id="CHEBI:49883"/>
    </cofactor>
    <text evidence="1">Binds 1 [4Fe-4S] cluster per subunit. The cluster is chelated by three Cys residues, the fourth Fe has a free coordination site that may bind a sulfur atom transferred from the persulfide of IscS.</text>
</comment>
<comment type="pathway">
    <text evidence="1">tRNA modification.</text>
</comment>
<comment type="subunit">
    <text evidence="1">Homodimer.</text>
</comment>
<comment type="subcellular location">
    <subcellularLocation>
        <location evidence="1">Cytoplasm</location>
    </subcellularLocation>
</comment>
<comment type="miscellaneous">
    <text evidence="1">The thiolation reaction likely consists of two steps: a first activation step by ATP to form an adenylated intermediate of the target base of tRNA, and a second nucleophilic substitution step of the sulfur (S) atom supplied by the hydrosulfide attached to the Fe-S cluster.</text>
</comment>
<comment type="similarity">
    <text evidence="1">Belongs to the TtcA family.</text>
</comment>
<organism>
    <name type="scientific">Paracoccus denitrificans (strain Pd 1222)</name>
    <dbReference type="NCBI Taxonomy" id="318586"/>
    <lineage>
        <taxon>Bacteria</taxon>
        <taxon>Pseudomonadati</taxon>
        <taxon>Pseudomonadota</taxon>
        <taxon>Alphaproteobacteria</taxon>
        <taxon>Rhodobacterales</taxon>
        <taxon>Paracoccaceae</taxon>
        <taxon>Paracoccus</taxon>
    </lineage>
</organism>
<keyword id="KW-0004">4Fe-4S</keyword>
<keyword id="KW-0067">ATP-binding</keyword>
<keyword id="KW-0963">Cytoplasm</keyword>
<keyword id="KW-0408">Iron</keyword>
<keyword id="KW-0411">Iron-sulfur</keyword>
<keyword id="KW-0460">Magnesium</keyword>
<keyword id="KW-0479">Metal-binding</keyword>
<keyword id="KW-0547">Nucleotide-binding</keyword>
<keyword id="KW-1185">Reference proteome</keyword>
<keyword id="KW-0694">RNA-binding</keyword>
<keyword id="KW-0808">Transferase</keyword>
<keyword id="KW-0819">tRNA processing</keyword>
<keyword id="KW-0820">tRNA-binding</keyword>
<accession>A1B0E2</accession>
<feature type="chain" id="PRO_0000348780" description="tRNA-cytidine(32) 2-sulfurtransferase">
    <location>
        <begin position="1"/>
        <end position="297"/>
    </location>
</feature>
<feature type="short sequence motif" description="PP-loop motif" evidence="1">
    <location>
        <begin position="61"/>
        <end position="66"/>
    </location>
</feature>
<feature type="binding site" evidence="1">
    <location>
        <position position="136"/>
    </location>
    <ligand>
        <name>[4Fe-4S] cluster</name>
        <dbReference type="ChEBI" id="CHEBI:49883"/>
    </ligand>
</feature>
<feature type="binding site" evidence="1">
    <location>
        <position position="139"/>
    </location>
    <ligand>
        <name>[4Fe-4S] cluster</name>
        <dbReference type="ChEBI" id="CHEBI:49883"/>
    </ligand>
</feature>
<feature type="binding site" evidence="1">
    <location>
        <position position="227"/>
    </location>
    <ligand>
        <name>[4Fe-4S] cluster</name>
        <dbReference type="ChEBI" id="CHEBI:49883"/>
    </ligand>
</feature>